<accession>P49465</accession>
<geneLocation type="chloroplast"/>
<reference key="1">
    <citation type="journal article" date="1995" name="Plant Mol. Biol. Rep.">
        <title>The chloroplast genome of a chlorophyll a+c-containing alga, Odontella sinensis.</title>
        <authorList>
            <person name="Kowallik K.V."/>
            <person name="Stoebe B."/>
            <person name="Schaffran I."/>
            <person name="Kroth-Pancic P."/>
            <person name="Freier U."/>
        </authorList>
    </citation>
    <scope>NUCLEOTIDE SEQUENCE [LARGE SCALE GENOMIC DNA]</scope>
</reference>
<organism>
    <name type="scientific">Trieres chinensis</name>
    <name type="common">Marine centric diatom</name>
    <name type="synonym">Odontella sinensis</name>
    <dbReference type="NCBI Taxonomy" id="1514140"/>
    <lineage>
        <taxon>Eukaryota</taxon>
        <taxon>Sar</taxon>
        <taxon>Stramenopiles</taxon>
        <taxon>Ochrophyta</taxon>
        <taxon>Bacillariophyta</taxon>
        <taxon>Mediophyceae</taxon>
        <taxon>Biddulphiophycidae</taxon>
        <taxon>Eupodiscales</taxon>
        <taxon>Parodontellaceae</taxon>
        <taxon>Trieres</taxon>
    </lineage>
</organism>
<dbReference type="EC" id="2.7.7.6" evidence="1"/>
<dbReference type="EMBL" id="Z67753">
    <property type="protein sequence ID" value="CAA91627.1"/>
    <property type="molecule type" value="Genomic_DNA"/>
</dbReference>
<dbReference type="PIR" id="S78254">
    <property type="entry name" value="S78254"/>
</dbReference>
<dbReference type="RefSeq" id="NP_043595.1">
    <property type="nucleotide sequence ID" value="NC_001713.1"/>
</dbReference>
<dbReference type="SMR" id="P49465"/>
<dbReference type="GeneID" id="801807"/>
<dbReference type="GO" id="GO:0009507">
    <property type="term" value="C:chloroplast"/>
    <property type="evidence" value="ECO:0007669"/>
    <property type="project" value="UniProtKB-SubCell"/>
</dbReference>
<dbReference type="GO" id="GO:0000428">
    <property type="term" value="C:DNA-directed RNA polymerase complex"/>
    <property type="evidence" value="ECO:0007669"/>
    <property type="project" value="UniProtKB-KW"/>
</dbReference>
<dbReference type="GO" id="GO:0005739">
    <property type="term" value="C:mitochondrion"/>
    <property type="evidence" value="ECO:0007669"/>
    <property type="project" value="GOC"/>
</dbReference>
<dbReference type="GO" id="GO:0003677">
    <property type="term" value="F:DNA binding"/>
    <property type="evidence" value="ECO:0007669"/>
    <property type="project" value="UniProtKB-UniRule"/>
</dbReference>
<dbReference type="GO" id="GO:0003899">
    <property type="term" value="F:DNA-directed RNA polymerase activity"/>
    <property type="evidence" value="ECO:0007669"/>
    <property type="project" value="UniProtKB-UniRule"/>
</dbReference>
<dbReference type="GO" id="GO:0046983">
    <property type="term" value="F:protein dimerization activity"/>
    <property type="evidence" value="ECO:0007669"/>
    <property type="project" value="InterPro"/>
</dbReference>
<dbReference type="GO" id="GO:0006351">
    <property type="term" value="P:DNA-templated transcription"/>
    <property type="evidence" value="ECO:0007669"/>
    <property type="project" value="UniProtKB-UniRule"/>
</dbReference>
<dbReference type="CDD" id="cd06928">
    <property type="entry name" value="RNAP_alpha_NTD"/>
    <property type="match status" value="1"/>
</dbReference>
<dbReference type="FunFam" id="2.170.120.12:FF:000001">
    <property type="entry name" value="DNA-directed RNA polymerase subunit alpha"/>
    <property type="match status" value="1"/>
</dbReference>
<dbReference type="Gene3D" id="1.10.150.20">
    <property type="entry name" value="5' to 3' exonuclease, C-terminal subdomain"/>
    <property type="match status" value="1"/>
</dbReference>
<dbReference type="Gene3D" id="2.170.120.12">
    <property type="entry name" value="DNA-directed RNA polymerase, insert domain"/>
    <property type="match status" value="1"/>
</dbReference>
<dbReference type="Gene3D" id="3.30.1360.10">
    <property type="entry name" value="RNA polymerase, RBP11-like subunit"/>
    <property type="match status" value="1"/>
</dbReference>
<dbReference type="HAMAP" id="MF_00059">
    <property type="entry name" value="RNApol_bact_RpoA"/>
    <property type="match status" value="1"/>
</dbReference>
<dbReference type="InterPro" id="IPR011262">
    <property type="entry name" value="DNA-dir_RNA_pol_insert"/>
</dbReference>
<dbReference type="InterPro" id="IPR011263">
    <property type="entry name" value="DNA-dir_RNA_pol_RpoA/D/Rpb3"/>
</dbReference>
<dbReference type="InterPro" id="IPR011773">
    <property type="entry name" value="DNA-dir_RpoA"/>
</dbReference>
<dbReference type="InterPro" id="IPR036603">
    <property type="entry name" value="RBP11-like"/>
</dbReference>
<dbReference type="InterPro" id="IPR011260">
    <property type="entry name" value="RNAP_asu_C"/>
</dbReference>
<dbReference type="InterPro" id="IPR036643">
    <property type="entry name" value="RNApol_insert_sf"/>
</dbReference>
<dbReference type="NCBIfam" id="NF003516">
    <property type="entry name" value="PRK05182.2-2"/>
    <property type="match status" value="1"/>
</dbReference>
<dbReference type="NCBIfam" id="NF003519">
    <property type="entry name" value="PRK05182.2-5"/>
    <property type="match status" value="1"/>
</dbReference>
<dbReference type="NCBIfam" id="TIGR02027">
    <property type="entry name" value="rpoA"/>
    <property type="match status" value="1"/>
</dbReference>
<dbReference type="Pfam" id="PF01000">
    <property type="entry name" value="RNA_pol_A_bac"/>
    <property type="match status" value="1"/>
</dbReference>
<dbReference type="Pfam" id="PF03118">
    <property type="entry name" value="RNA_pol_A_CTD"/>
    <property type="match status" value="1"/>
</dbReference>
<dbReference type="Pfam" id="PF01193">
    <property type="entry name" value="RNA_pol_L"/>
    <property type="match status" value="1"/>
</dbReference>
<dbReference type="SMART" id="SM00662">
    <property type="entry name" value="RPOLD"/>
    <property type="match status" value="1"/>
</dbReference>
<dbReference type="SUPFAM" id="SSF47789">
    <property type="entry name" value="C-terminal domain of RNA polymerase alpha subunit"/>
    <property type="match status" value="1"/>
</dbReference>
<dbReference type="SUPFAM" id="SSF56553">
    <property type="entry name" value="Insert subdomain of RNA polymerase alpha subunit"/>
    <property type="match status" value="1"/>
</dbReference>
<dbReference type="SUPFAM" id="SSF55257">
    <property type="entry name" value="RBP11-like subunits of RNA polymerase"/>
    <property type="match status" value="1"/>
</dbReference>
<comment type="function">
    <text evidence="1">DNA-dependent RNA polymerase catalyzes the transcription of DNA into RNA using the four ribonucleoside triphosphates as substrates.</text>
</comment>
<comment type="catalytic activity">
    <reaction evidence="1">
        <text>RNA(n) + a ribonucleoside 5'-triphosphate = RNA(n+1) + diphosphate</text>
        <dbReference type="Rhea" id="RHEA:21248"/>
        <dbReference type="Rhea" id="RHEA-COMP:14527"/>
        <dbReference type="Rhea" id="RHEA-COMP:17342"/>
        <dbReference type="ChEBI" id="CHEBI:33019"/>
        <dbReference type="ChEBI" id="CHEBI:61557"/>
        <dbReference type="ChEBI" id="CHEBI:140395"/>
        <dbReference type="EC" id="2.7.7.6"/>
    </reaction>
</comment>
<comment type="subunit">
    <text evidence="1">In plastids the minimal PEP RNA polymerase catalytic core is composed of four subunits: alpha, beta, beta', and beta''. When a (nuclear-encoded) sigma factor is associated with the core the holoenzyme is formed, which can initiate transcription.</text>
</comment>
<comment type="subcellular location">
    <subcellularLocation>
        <location>Plastid</location>
        <location>Chloroplast</location>
    </subcellularLocation>
</comment>
<comment type="domain">
    <text evidence="1">The N-terminal domain is essential for RNAP assembly and basal transcription, whereas the C-terminal domain is involved in interaction with transcriptional regulators and with upstream promoter elements.</text>
</comment>
<comment type="similarity">
    <text evidence="1">Belongs to the RNA polymerase alpha chain family.</text>
</comment>
<protein>
    <recommendedName>
        <fullName evidence="1">DNA-directed RNA polymerase subunit alpha</fullName>
        <shortName evidence="1">PEP</shortName>
        <ecNumber evidence="1">2.7.7.6</ecNumber>
    </recommendedName>
    <alternativeName>
        <fullName evidence="1">Plastid-encoded RNA polymerase subunit alpha</fullName>
        <shortName evidence="1">RNA polymerase subunit alpha</shortName>
    </alternativeName>
</protein>
<gene>
    <name evidence="1" type="primary">rpoA</name>
</gene>
<feature type="chain" id="PRO_0000175474" description="DNA-directed RNA polymerase subunit alpha">
    <location>
        <begin position="1"/>
        <end position="312"/>
    </location>
</feature>
<feature type="region of interest" description="Alpha N-terminal domain (alpha-NTD)" evidence="1">
    <location>
        <begin position="1"/>
        <end position="227"/>
    </location>
</feature>
<feature type="region of interest" description="Alpha C-terminal domain (alpha-CTD)" evidence="1">
    <location>
        <begin position="243"/>
        <end position="312"/>
    </location>
</feature>
<proteinExistence type="inferred from homology"/>
<evidence type="ECO:0000255" key="1">
    <source>
        <dbReference type="HAMAP-Rule" id="MF_00059"/>
    </source>
</evidence>
<name>RPOA_TRICV</name>
<keyword id="KW-0150">Chloroplast</keyword>
<keyword id="KW-0240">DNA-directed RNA polymerase</keyword>
<keyword id="KW-0548">Nucleotidyltransferase</keyword>
<keyword id="KW-0934">Plastid</keyword>
<keyword id="KW-0804">Transcription</keyword>
<keyword id="KW-0808">Transferase</keyword>
<sequence>MNNFYIKCLKSKKVESGSIYGQFVIKSLHPGQGITIGNLFRRVLLSDLGGTAITGVRIAGVRDEFSTIPGIREDILEILLNLKGIVLKSKTNDLKFGRLKIKGPAVVTANCIQLPSEVEIVNPNHYIATITTSNVLEIEFKIESGTGYKLAGQTFCKKSQDYLQIDAIFMPVQKVDFKIENIYDNSNDLTERLFLDIWTNGSMSPEEAVSSASRFIISFFSSLLENKLPQETKESENKTLSAPKNPHTNIAIEELHLSVRAYNCLKRAQINTIGDLLKYSPEKLQELKNFGRKSADEVFTTLKNKLGIVLSN</sequence>